<protein>
    <recommendedName>
        <fullName evidence="1">Oligoribonuclease</fullName>
        <ecNumber evidence="1">3.1.15.-</ecNumber>
    </recommendedName>
</protein>
<feature type="chain" id="PRO_1000004255" description="Oligoribonuclease">
    <location>
        <begin position="1"/>
        <end position="182"/>
    </location>
</feature>
<feature type="domain" description="Exonuclease" evidence="1">
    <location>
        <begin position="7"/>
        <end position="170"/>
    </location>
</feature>
<feature type="active site" evidence="1">
    <location>
        <position position="128"/>
    </location>
</feature>
<evidence type="ECO:0000255" key="1">
    <source>
        <dbReference type="HAMAP-Rule" id="MF_00045"/>
    </source>
</evidence>
<sequence>MSRRDNLIWIDLEMTGLDPDSDRIIEMAVVVTTSNLELVAEGPVIAVHQPDSVLALMDDWNRNTHGASGLTGRVKGSTIGEADAEKQILDFLAQHVDAGCSPMCGNSIGQDRRFLARYMKDLEKFFHYRNLDVSTLKELARRWRPEVAAGIKKKGSHQALEDIRESVEELRYYREHFLRLTD</sequence>
<reference key="1">
    <citation type="journal article" date="2005" name="Nucleic Acids Res.">
        <title>Genomic blueprint of Hahella chejuensis, a marine microbe producing an algicidal agent.</title>
        <authorList>
            <person name="Jeong H."/>
            <person name="Yim J.H."/>
            <person name="Lee C."/>
            <person name="Choi S.-H."/>
            <person name="Park Y.K."/>
            <person name="Yoon S.H."/>
            <person name="Hur C.-G."/>
            <person name="Kang H.-Y."/>
            <person name="Kim D."/>
            <person name="Lee H.H."/>
            <person name="Park K.H."/>
            <person name="Park S.-H."/>
            <person name="Park H.-S."/>
            <person name="Lee H.K."/>
            <person name="Oh T.K."/>
            <person name="Kim J.F."/>
        </authorList>
    </citation>
    <scope>NUCLEOTIDE SEQUENCE [LARGE SCALE GENOMIC DNA]</scope>
    <source>
        <strain>KCTC 2396</strain>
    </source>
</reference>
<dbReference type="EC" id="3.1.15.-" evidence="1"/>
<dbReference type="EMBL" id="CP000155">
    <property type="protein sequence ID" value="ABC32060.1"/>
    <property type="molecule type" value="Genomic_DNA"/>
</dbReference>
<dbReference type="RefSeq" id="WP_011399124.1">
    <property type="nucleotide sequence ID" value="NC_007645.1"/>
</dbReference>
<dbReference type="SMR" id="Q2SBB4"/>
<dbReference type="STRING" id="349521.HCH_05390"/>
<dbReference type="KEGG" id="hch:HCH_05390"/>
<dbReference type="eggNOG" id="COG1949">
    <property type="taxonomic scope" value="Bacteria"/>
</dbReference>
<dbReference type="HOGENOM" id="CLU_064761_2_0_6"/>
<dbReference type="OrthoDB" id="9801329at2"/>
<dbReference type="Proteomes" id="UP000000238">
    <property type="component" value="Chromosome"/>
</dbReference>
<dbReference type="GO" id="GO:0005737">
    <property type="term" value="C:cytoplasm"/>
    <property type="evidence" value="ECO:0007669"/>
    <property type="project" value="UniProtKB-SubCell"/>
</dbReference>
<dbReference type="GO" id="GO:0000175">
    <property type="term" value="F:3'-5'-RNA exonuclease activity"/>
    <property type="evidence" value="ECO:0007669"/>
    <property type="project" value="InterPro"/>
</dbReference>
<dbReference type="GO" id="GO:0003676">
    <property type="term" value="F:nucleic acid binding"/>
    <property type="evidence" value="ECO:0007669"/>
    <property type="project" value="InterPro"/>
</dbReference>
<dbReference type="GO" id="GO:0006259">
    <property type="term" value="P:DNA metabolic process"/>
    <property type="evidence" value="ECO:0007669"/>
    <property type="project" value="UniProtKB-ARBA"/>
</dbReference>
<dbReference type="CDD" id="cd06135">
    <property type="entry name" value="Orn"/>
    <property type="match status" value="1"/>
</dbReference>
<dbReference type="FunFam" id="3.30.420.10:FF:000003">
    <property type="entry name" value="Oligoribonuclease"/>
    <property type="match status" value="1"/>
</dbReference>
<dbReference type="Gene3D" id="3.30.420.10">
    <property type="entry name" value="Ribonuclease H-like superfamily/Ribonuclease H"/>
    <property type="match status" value="1"/>
</dbReference>
<dbReference type="HAMAP" id="MF_00045">
    <property type="entry name" value="Oligoribonuclease"/>
    <property type="match status" value="1"/>
</dbReference>
<dbReference type="InterPro" id="IPR013520">
    <property type="entry name" value="Exonuclease_RNaseT/DNA_pol3"/>
</dbReference>
<dbReference type="InterPro" id="IPR022894">
    <property type="entry name" value="Oligoribonuclease"/>
</dbReference>
<dbReference type="InterPro" id="IPR012337">
    <property type="entry name" value="RNaseH-like_sf"/>
</dbReference>
<dbReference type="InterPro" id="IPR036397">
    <property type="entry name" value="RNaseH_sf"/>
</dbReference>
<dbReference type="NCBIfam" id="NF003765">
    <property type="entry name" value="PRK05359.1"/>
    <property type="match status" value="1"/>
</dbReference>
<dbReference type="PANTHER" id="PTHR11046">
    <property type="entry name" value="OLIGORIBONUCLEASE, MITOCHONDRIAL"/>
    <property type="match status" value="1"/>
</dbReference>
<dbReference type="PANTHER" id="PTHR11046:SF0">
    <property type="entry name" value="OLIGORIBONUCLEASE, MITOCHONDRIAL"/>
    <property type="match status" value="1"/>
</dbReference>
<dbReference type="Pfam" id="PF00929">
    <property type="entry name" value="RNase_T"/>
    <property type="match status" value="1"/>
</dbReference>
<dbReference type="SMART" id="SM00479">
    <property type="entry name" value="EXOIII"/>
    <property type="match status" value="1"/>
</dbReference>
<dbReference type="SUPFAM" id="SSF53098">
    <property type="entry name" value="Ribonuclease H-like"/>
    <property type="match status" value="1"/>
</dbReference>
<comment type="function">
    <text evidence="1">3'-to-5' exoribonuclease specific for small oligoribonucleotides.</text>
</comment>
<comment type="subcellular location">
    <subcellularLocation>
        <location evidence="1">Cytoplasm</location>
    </subcellularLocation>
</comment>
<comment type="similarity">
    <text evidence="1">Belongs to the oligoribonuclease family.</text>
</comment>
<gene>
    <name evidence="1" type="primary">orn</name>
    <name type="ordered locus">HCH_05390</name>
</gene>
<proteinExistence type="inferred from homology"/>
<keyword id="KW-0963">Cytoplasm</keyword>
<keyword id="KW-0269">Exonuclease</keyword>
<keyword id="KW-0378">Hydrolase</keyword>
<keyword id="KW-0540">Nuclease</keyword>
<keyword id="KW-1185">Reference proteome</keyword>
<accession>Q2SBB4</accession>
<name>ORN_HAHCH</name>
<organism>
    <name type="scientific">Hahella chejuensis (strain KCTC 2396)</name>
    <dbReference type="NCBI Taxonomy" id="349521"/>
    <lineage>
        <taxon>Bacteria</taxon>
        <taxon>Pseudomonadati</taxon>
        <taxon>Pseudomonadota</taxon>
        <taxon>Gammaproteobacteria</taxon>
        <taxon>Oceanospirillales</taxon>
        <taxon>Hahellaceae</taxon>
        <taxon>Hahella</taxon>
    </lineage>
</organism>